<feature type="transit peptide" description="Mitochondrion" evidence="1">
    <location>
        <begin position="1"/>
        <end position="29"/>
    </location>
</feature>
<feature type="chain" id="PRO_0000032562" description="Serine hydroxymethyltransferase, mitochondrial">
    <location>
        <begin position="30"/>
        <end position="504"/>
    </location>
</feature>
<feature type="region of interest" description="Disordered" evidence="2">
    <location>
        <begin position="30"/>
        <end position="51"/>
    </location>
</feature>
<feature type="compositionally biased region" description="Polar residues" evidence="2">
    <location>
        <begin position="30"/>
        <end position="49"/>
    </location>
</feature>
<feature type="modified residue" description="N6-acetyllysine" evidence="19">
    <location>
        <position position="103"/>
    </location>
</feature>
<feature type="modified residue" description="N6-acetyllysine" evidence="19">
    <location>
        <position position="181"/>
    </location>
</feature>
<feature type="modified residue" description="N6-acetyllysine" evidence="19">
    <location>
        <position position="196"/>
    </location>
</feature>
<feature type="modified residue" description="N6-(pyridoxal phosphate)lysine; alternate" evidence="16">
    <location>
        <position position="280"/>
    </location>
</feature>
<feature type="modified residue" description="N6-succinyllysine; alternate" evidence="8">
    <location>
        <position position="280"/>
    </location>
</feature>
<feature type="modified residue" description="N6-acetyllysine" evidence="19">
    <location>
        <position position="297"/>
    </location>
</feature>
<feature type="modified residue" description="N6-acetyllysine" evidence="19">
    <location>
        <position position="356"/>
    </location>
</feature>
<feature type="modified residue" description="N6-acetyllysine" evidence="19">
    <location>
        <position position="464"/>
    </location>
</feature>
<feature type="modified residue" description="N6-acetyllysine" evidence="19">
    <location>
        <position position="469"/>
    </location>
</feature>
<feature type="modified residue" description="Phosphoserine" evidence="20">
    <location>
        <position position="470"/>
    </location>
</feature>
<feature type="modified residue" description="N6-acetyllysine" evidence="19">
    <location>
        <position position="474"/>
    </location>
</feature>
<feature type="splice variant" id="VSP_043844" description="In isoform 3." evidence="12">
    <location>
        <begin position="1"/>
        <end position="21"/>
    </location>
</feature>
<feature type="splice variant" id="VSP_043088" description="In isoform 2." evidence="13">
    <location>
        <begin position="199"/>
        <end position="208"/>
    </location>
</feature>
<feature type="sequence variant" id="VAR_085466" description="In NEDCASB; uncertain significance; dbSNP:rs1426413125." evidence="11">
    <original>P</original>
    <variation>S</variation>
    <location>
        <position position="157"/>
    </location>
</feature>
<feature type="sequence variant" id="VAR_085467" description="In NEDCASB; uncertain significance; dbSNP:rs769908186." evidence="11">
    <original>T</original>
    <variation>R</variation>
    <location>
        <position position="186"/>
    </location>
</feature>
<feature type="sequence variant" id="VAR_085468" description="In NEDCASB; uncertain significance; dbSNP:rs2037432429." evidence="11">
    <original>N</original>
    <variation>D</variation>
    <location>
        <position position="379"/>
    </location>
</feature>
<feature type="sequence variant" id="VAR_085469" description="In NEDCASB; uncertain significance; dbSNP:rs751223752." evidence="11">
    <original>G</original>
    <variation>S</variation>
    <location>
        <position position="423"/>
    </location>
</feature>
<feature type="sequence variant" id="VAR_085470" description="In NEDCASB; uncertain significance; dbSNP:rs2037448764." evidence="11">
    <original>Q</original>
    <variation>P</variation>
    <location>
        <position position="435"/>
    </location>
</feature>
<feature type="sequence variant" id="VAR_085471" description="In NEDCASB; no effect on protein abundance; decreased glycine hydroxymethyltransferase activity; associated with altered mitochondrial redox metabolism; dbSNP:rs2037465152." evidence="11">
    <original>P</original>
    <variation>A</variation>
    <location>
        <position position="499"/>
    </location>
</feature>
<feature type="mutagenesis site" description="Abolishes serine hydroxymethyltransferase activity, leading to oxidative phosphorylation deficiency; when associated with F-106." evidence="9">
    <original>E</original>
    <variation>L</variation>
    <location>
        <position position="98"/>
    </location>
</feature>
<feature type="mutagenesis site" description="Does not affect succinylation level or hydroxymethyltransferase activity." evidence="8">
    <original>K</original>
    <variation>R</variation>
    <variation>E</variation>
    <location>
        <position position="103"/>
    </location>
</feature>
<feature type="mutagenesis site" description="Abolishes serine hydroxymethyltransferase activity, leading to oxidative phosphorylation deficiency; when associated with L-98." evidence="9">
    <original>Y</original>
    <variation>F</variation>
    <location>
        <position position="106"/>
    </location>
</feature>
<feature type="mutagenesis site" description="Abolishes pyridoxal phosphate-binding, leading to oxidative phosphorylation deficiency." evidence="9">
    <original>K</original>
    <variation>Q</variation>
    <location>
        <position position="280"/>
    </location>
</feature>
<feature type="mutagenesis site" description="Decreased succinylation level and hydroxymethyltransferase activity." evidence="8">
    <original>K</original>
    <variation>R</variation>
    <variation>E</variation>
    <location>
        <position position="280"/>
    </location>
</feature>
<feature type="mutagenesis site" description="Does not affect succinylation level or hydroxymethyltransferase activity." evidence="8">
    <original>K</original>
    <variation>R</variation>
    <variation>E</variation>
    <location>
        <position position="302"/>
    </location>
</feature>
<feature type="mutagenesis site" description="Does not affect succinylation level or hydroxymethyltransferase activity." evidence="8">
    <original>K</original>
    <variation>R</variation>
    <variation>E</variation>
    <location>
        <position position="356"/>
    </location>
</feature>
<feature type="mutagenesis site" description="Does not affect succinylation level or hydroxymethyltransferase activity." evidence="8">
    <original>K</original>
    <variation>R</variation>
    <variation>E</variation>
    <location>
        <position position="464"/>
    </location>
</feature>
<feature type="mutagenesis site" description="Does not affect succinylation level or hydroxymethyltransferase activity." evidence="8">
    <original>K</original>
    <variation>R</variation>
    <variation>E</variation>
    <location>
        <position position="469"/>
    </location>
</feature>
<feature type="mutagenesis site" description="Does not affect succinylation level or hydroxymethyltransferase activity." evidence="8">
    <original>K</original>
    <variation>R</variation>
    <variation>E</variation>
    <location>
        <position position="474"/>
    </location>
</feature>
<feature type="sequence conflict" description="In Ref. 8; AAA63258." evidence="14" ref="8">
    <original>P</original>
    <variation>L</variation>
    <location>
        <position position="308"/>
    </location>
</feature>
<feature type="helix" evidence="24">
    <location>
        <begin position="37"/>
        <end position="40"/>
    </location>
</feature>
<feature type="helix" evidence="24">
    <location>
        <begin position="49"/>
        <end position="52"/>
    </location>
</feature>
<feature type="helix" evidence="24">
    <location>
        <begin position="54"/>
        <end position="69"/>
    </location>
</feature>
<feature type="strand" evidence="24">
    <location>
        <begin position="70"/>
        <end position="72"/>
    </location>
</feature>
<feature type="helix" evidence="24">
    <location>
        <begin position="82"/>
        <end position="88"/>
    </location>
</feature>
<feature type="helix" evidence="24">
    <location>
        <begin position="91"/>
        <end position="94"/>
    </location>
</feature>
<feature type="strand" evidence="24">
    <location>
        <begin position="103"/>
        <end position="107"/>
    </location>
</feature>
<feature type="helix" evidence="24">
    <location>
        <begin position="110"/>
        <end position="126"/>
    </location>
</feature>
<feature type="turn" evidence="24">
    <location>
        <begin position="131"/>
        <end position="133"/>
    </location>
</feature>
<feature type="strand" evidence="24">
    <location>
        <begin position="134"/>
        <end position="137"/>
    </location>
</feature>
<feature type="helix" evidence="24">
    <location>
        <begin position="143"/>
        <end position="154"/>
    </location>
</feature>
<feature type="strand" evidence="24">
    <location>
        <begin position="160"/>
        <end position="164"/>
    </location>
</feature>
<feature type="helix" evidence="24">
    <location>
        <begin position="166"/>
        <end position="168"/>
    </location>
</feature>
<feature type="helix" evidence="24">
    <location>
        <begin position="172"/>
        <end position="174"/>
    </location>
</feature>
<feature type="helix" evidence="24">
    <location>
        <begin position="185"/>
        <end position="187"/>
    </location>
</feature>
<feature type="strand" evidence="24">
    <location>
        <begin position="189"/>
        <end position="195"/>
    </location>
</feature>
<feature type="turn" evidence="24">
    <location>
        <begin position="199"/>
        <end position="201"/>
    </location>
</feature>
<feature type="strand" evidence="23">
    <location>
        <begin position="202"/>
        <end position="204"/>
    </location>
</feature>
<feature type="helix" evidence="24">
    <location>
        <begin position="206"/>
        <end position="216"/>
    </location>
</feature>
<feature type="strand" evidence="24">
    <location>
        <begin position="219"/>
        <end position="223"/>
    </location>
</feature>
<feature type="helix" evidence="24">
    <location>
        <begin position="234"/>
        <end position="244"/>
    </location>
</feature>
<feature type="strand" evidence="24">
    <location>
        <begin position="247"/>
        <end position="251"/>
    </location>
</feature>
<feature type="helix" evidence="24">
    <location>
        <begin position="253"/>
        <end position="255"/>
    </location>
</feature>
<feature type="helix" evidence="24">
    <location>
        <begin position="256"/>
        <end position="260"/>
    </location>
</feature>
<feature type="helix" evidence="24">
    <location>
        <begin position="267"/>
        <end position="269"/>
    </location>
</feature>
<feature type="strand" evidence="24">
    <location>
        <begin position="272"/>
        <end position="280"/>
    </location>
</feature>
<feature type="strand" evidence="24">
    <location>
        <begin position="288"/>
        <end position="293"/>
    </location>
</feature>
<feature type="strand" evidence="21">
    <location>
        <begin position="295"/>
        <end position="299"/>
    </location>
</feature>
<feature type="strand" evidence="22">
    <location>
        <begin position="301"/>
        <end position="303"/>
    </location>
</feature>
<feature type="strand" evidence="21">
    <location>
        <begin position="306"/>
        <end position="308"/>
    </location>
</feature>
<feature type="helix" evidence="24">
    <location>
        <begin position="311"/>
        <end position="319"/>
    </location>
</feature>
<feature type="turn" evidence="24">
    <location>
        <begin position="320"/>
        <end position="323"/>
    </location>
</feature>
<feature type="helix" evidence="24">
    <location>
        <begin position="329"/>
        <end position="342"/>
    </location>
</feature>
<feature type="helix" evidence="24">
    <location>
        <begin position="345"/>
        <end position="367"/>
    </location>
</feature>
<feature type="helix" evidence="24">
    <location>
        <begin position="373"/>
        <end position="375"/>
    </location>
</feature>
<feature type="strand" evidence="24">
    <location>
        <begin position="378"/>
        <end position="385"/>
    </location>
</feature>
<feature type="helix" evidence="24">
    <location>
        <begin position="387"/>
        <end position="389"/>
    </location>
</feature>
<feature type="helix" evidence="24">
    <location>
        <begin position="393"/>
        <end position="402"/>
    </location>
</feature>
<feature type="strand" evidence="24">
    <location>
        <begin position="408"/>
        <end position="410"/>
    </location>
</feature>
<feature type="strand" evidence="24">
    <location>
        <begin position="418"/>
        <end position="420"/>
    </location>
</feature>
<feature type="strand" evidence="24">
    <location>
        <begin position="422"/>
        <end position="428"/>
    </location>
</feature>
<feature type="helix" evidence="24">
    <location>
        <begin position="429"/>
        <end position="432"/>
    </location>
</feature>
<feature type="turn" evidence="24">
    <location>
        <begin position="433"/>
        <end position="435"/>
    </location>
</feature>
<feature type="helix" evidence="24">
    <location>
        <begin position="438"/>
        <end position="459"/>
    </location>
</feature>
<feature type="helix" evidence="24">
    <location>
        <begin position="465"/>
        <end position="474"/>
    </location>
</feature>
<feature type="helix" evidence="24">
    <location>
        <begin position="476"/>
        <end position="494"/>
    </location>
</feature>
<sequence>MLYFSLFWAARPLQRCGQLVRMAIRAQHSNAAQTQTGEANRGWTGQESLSDSDPEMWELLQREKDRQCRGLELIASENFCSRAALEALGSCLNNKYSEGYPGKRYYGGAEVVDEIELLCQRRALEAFDLDPAQWGVNVQPYSGSPANLAVYTALLQPHDRIMGLDLPDGGHLTHGYMSDVKRISATSIFFESMPYKLNPKTGLIDYNQLALTARLFRPRLIIAGTSAYARLIDYARMREVCDEVKAHLLADMAHISGLVAAKVIPSPFKHADIVTTTTHKTLRGARSGLIFYRKGVKAVDPKTGREIPYTFEDRINFAVFPSLQGGPHNHAIAAVAVALKQACTPMFREYSLQVLKNARAMADALLERGYSLVSGGTDNHLVLVDLRPKGLDGARAERVLELVSITANKNTCPGDRSAITPGGLRLGAPALTSRQFREDDFRRVVDFIDEGVNIGLEVKSKTAKLQDFKSFLLKDSETSQRLANLRQRVEQFARAFPMPGFDEH</sequence>
<keyword id="KW-0002">3D-structure</keyword>
<keyword id="KW-0007">Acetylation</keyword>
<keyword id="KW-0025">Alternative splicing</keyword>
<keyword id="KW-0122">Cardiomyopathy</keyword>
<keyword id="KW-0963">Cytoplasm</keyword>
<keyword id="KW-0225">Disease variant</keyword>
<keyword id="KW-0991">Intellectual disability</keyword>
<keyword id="KW-0472">Membrane</keyword>
<keyword id="KW-0496">Mitochondrion</keyword>
<keyword id="KW-0999">Mitochondrion inner membrane</keyword>
<keyword id="KW-1135">Mitochondrion nucleoid</keyword>
<keyword id="KW-0539">Nucleus</keyword>
<keyword id="KW-0554">One-carbon metabolism</keyword>
<keyword id="KW-0597">Phosphoprotein</keyword>
<keyword id="KW-1267">Proteomics identification</keyword>
<keyword id="KW-0663">Pyridoxal phosphate</keyword>
<keyword id="KW-1185">Reference proteome</keyword>
<keyword id="KW-0808">Transferase</keyword>
<keyword id="KW-0809">Transit peptide</keyword>
<comment type="function">
    <text evidence="3 4 5 6 9 10 11">Catalyzes the cleavage of serine to glycine accompanied with the production of 5,10-methylenetetrahydrofolate, an essential intermediate for purine biosynthesis (PubMed:24075985, PubMed:25619277, PubMed:29364879, PubMed:33015733). Serine provides the major source of folate one-carbon in cells by catalyzing the transfer of one carbon from serine to tetrahydrofolate (PubMed:25619277). Contributes to the de novo mitochondrial thymidylate biosynthesis pathway via its role in glycine and tetrahydrofolate metabolism: thymidylate biosynthesis is required to prevent uracil accumulation in mtDNA (PubMed:21876188). Also required for mitochondrial translation by producing 5,10-methylenetetrahydrofolate; 5,10-methylenetetrahydrofolate providing methyl donors to produce the taurinomethyluridine base at the wobble position of some mitochondrial tRNAs (PubMed:29364879, PubMed:29452640). Associates with mitochondrial DNA (PubMed:18063578). In addition to its role in mitochondria, also plays a role in the deubiquitination of target proteins as component of the BRISC complex: required for IFNAR1 deubiquitination by the BRISC complex (PubMed:24075985).</text>
</comment>
<comment type="catalytic activity">
    <reaction evidence="5 6 9 11">
        <text>(6R)-5,10-methylene-5,6,7,8-tetrahydrofolate + glycine + H2O = (6S)-5,6,7,8-tetrahydrofolate + L-serine</text>
        <dbReference type="Rhea" id="RHEA:15481"/>
        <dbReference type="ChEBI" id="CHEBI:15377"/>
        <dbReference type="ChEBI" id="CHEBI:15636"/>
        <dbReference type="ChEBI" id="CHEBI:33384"/>
        <dbReference type="ChEBI" id="CHEBI:57305"/>
        <dbReference type="ChEBI" id="CHEBI:57453"/>
        <dbReference type="EC" id="2.1.2.1"/>
    </reaction>
    <physiologicalReaction direction="right-to-left" evidence="17">
        <dbReference type="Rhea" id="RHEA:15483"/>
    </physiologicalReaction>
</comment>
<comment type="cofactor">
    <cofactor evidence="6 16">
        <name>pyridoxal 5'-phosphate</name>
        <dbReference type="ChEBI" id="CHEBI:597326"/>
    </cofactor>
</comment>
<comment type="activity regulation">
    <text evidence="8">Hydroxymethyltransferase is inhibited by succinylation at Lys-280.</text>
</comment>
<comment type="biophysicochemical properties">
    <kinetics>
        <KM evidence="6">278 uM for L-serine</KM>
        <KM evidence="6">23 uM for tetrahydrofolate</KM>
    </kinetics>
</comment>
<comment type="pathway">
    <text evidence="15 17">One-carbon metabolism; tetrahydrofolate interconversion.</text>
</comment>
<comment type="subunit">
    <text evidence="5 6 7 8">Homotetramer; in the presence of bound pyridoxal 5'-phosphate (PubMed:25619277, PubMed:29180469). Homodimer; in the absence of bound pyridoxal 5'-phosphate (PubMed:25619277, PubMed:29180469). Pyridoxal 5'-phosphate binding mediates an important conformation change that is required for tetramerization (PubMed:25619277). Interacts with ABRAXAS2; the interaction is direct. Identified in a complex with ABRAXAS2 and the other subunits of the BRISC complex, at least composed of the ABRAXAS2, BRCC3/BRCC36, BABAM2 and BABAM1/NBA1. Identified in a complex with ABRAXAS2 and IFNAR1 (PubMed:24075985). Interacts with KIRREL3 (PubMed:25902260).</text>
</comment>
<comment type="interaction">
    <interactant intactId="EBI-352908">
        <id>P34897</id>
    </interactant>
    <interactant intactId="EBI-714543">
        <id>Q15041</id>
        <label>ARL6IP1</label>
    </interactant>
    <organismsDiffer>false</organismsDiffer>
    <experiments>6</experiments>
</comment>
<comment type="interaction">
    <interactant intactId="EBI-352908">
        <id>P34897</id>
    </interactant>
    <interactant intactId="EBI-750352">
        <id>P46736</id>
        <label>BRCC3</label>
    </interactant>
    <organismsDiffer>false</organismsDiffer>
    <experiments>4</experiments>
</comment>
<comment type="interaction">
    <interactant intactId="EBI-352908">
        <id>P34897</id>
    </interactant>
    <interactant intactId="EBI-306905">
        <id>Q9Y376</id>
        <label>CAB39</label>
    </interactant>
    <organismsDiffer>false</organismsDiffer>
    <experiments>3</experiments>
</comment>
<comment type="interaction">
    <interactant intactId="EBI-352908">
        <id>P34897</id>
    </interactant>
    <interactant intactId="EBI-2548702">
        <id>Q96DZ9</id>
        <label>CMTM5</label>
    </interactant>
    <organismsDiffer>false</organismsDiffer>
    <experiments>4</experiments>
</comment>
<comment type="interaction">
    <interactant intactId="EBI-352908">
        <id>P34897</id>
    </interactant>
    <interactant intactId="EBI-11522780">
        <id>Q96DZ9-2</id>
        <label>CMTM5</label>
    </interactant>
    <organismsDiffer>false</organismsDiffer>
    <experiments>3</experiments>
</comment>
<comment type="interaction">
    <interactant intactId="EBI-352908">
        <id>P34897</id>
    </interactant>
    <interactant intactId="EBI-16427312">
        <id>Q8IZU9</id>
        <label>KIRREL3</label>
    </interactant>
    <organismsDiffer>false</organismsDiffer>
    <experiments>4</experiments>
</comment>
<comment type="interaction">
    <interactant intactId="EBI-352908">
        <id>P34897</id>
    </interactant>
    <interactant intactId="EBI-944295">
        <id>Q969L2</id>
        <label>MAL2</label>
    </interactant>
    <organismsDiffer>false</organismsDiffer>
    <experiments>3</experiments>
</comment>
<comment type="interaction">
    <interactant intactId="EBI-352908">
        <id>P34897</id>
    </interactant>
    <interactant intactId="EBI-352908">
        <id>P34897</id>
        <label>SHMT2</label>
    </interactant>
    <organismsDiffer>false</organismsDiffer>
    <experiments>5</experiments>
</comment>
<comment type="subcellular location">
    <subcellularLocation>
        <location evidence="4 5">Mitochondrion</location>
    </subcellularLocation>
    <subcellularLocation>
        <location evidence="3">Mitochondrion matrix</location>
        <location evidence="3">Mitochondrion nucleoid</location>
    </subcellularLocation>
    <subcellularLocation>
        <location evidence="4">Mitochondrion inner membrane</location>
    </subcellularLocation>
    <subcellularLocation>
        <location evidence="5">Cytoplasm</location>
    </subcellularLocation>
    <subcellularLocation>
        <location evidence="5">Nucleus</location>
    </subcellularLocation>
    <text evidence="5">Mainly localizes in the mitochondrion. Also found in the cytoplasm and nucleus as part of the BRISC complex (PubMed:24075985).</text>
</comment>
<comment type="alternative products">
    <event type="alternative splicing"/>
    <isoform>
        <id>P34897-1</id>
        <name>1</name>
        <sequence type="displayed"/>
    </isoform>
    <isoform>
        <id>P34897-2</id>
        <name>2</name>
        <sequence type="described" ref="VSP_043088"/>
    </isoform>
    <isoform>
        <id>P34897-3</id>
        <name>3</name>
        <sequence type="described" ref="VSP_043844"/>
    </isoform>
</comment>
<comment type="PTM">
    <text evidence="8">Succinylation at Lys-280 inhibits the hydroxymethyltransferase activity. Desuccinylation by SIRT5 restores the activity, leading to promote cell proliferation.</text>
</comment>
<comment type="disease" evidence="11">
    <disease id="DI-05985">
        <name>Neurodevelopmental disorder with cardiomyopathy, spasticity, and brain abnormalities</name>
        <acronym>NEDCASB</acronym>
        <description>An autosomal recessive neurodevelopmental disorder characterized by global developmental delay, moderate to severe intellectual disability, spastic paraparesis, ataxia, and/or peripheral neuropathy. Patients also exhibit dysmorphic features and congenital microcephaly. Most affected individuals develop progressive hypertrophic cardiomyopathy in childhood or have cardiac developmental anomalies. Brain imaging shows corpus callosum abnormalities in all patients, and perisylvian polymicrogyria-like pattern in some individuals.</description>
        <dbReference type="MIM" id="619121"/>
    </disease>
    <text>The disease is caused by variants affecting the gene represented in this entry.</text>
</comment>
<comment type="miscellaneous">
    <text>In eukaryotes there are two forms of the enzymes: a cytosolic one and a mitochondrial one.</text>
</comment>
<comment type="similarity">
    <text evidence="14">Belongs to the SHMT family.</text>
</comment>
<gene>
    <name evidence="18" type="primary">SHMT2</name>
</gene>
<dbReference type="EC" id="2.1.2.1" evidence="5 6 9 11"/>
<dbReference type="EMBL" id="AK315916">
    <property type="protein sequence ID" value="BAH14287.1"/>
    <property type="molecule type" value="mRNA"/>
</dbReference>
<dbReference type="EMBL" id="BT006866">
    <property type="protein sequence ID" value="AAP35512.1"/>
    <property type="molecule type" value="mRNA"/>
</dbReference>
<dbReference type="EMBL" id="AC137834">
    <property type="status" value="NOT_ANNOTATED_CDS"/>
    <property type="molecule type" value="Genomic_DNA"/>
</dbReference>
<dbReference type="EMBL" id="CH471054">
    <property type="protein sequence ID" value="EAW96994.1"/>
    <property type="molecule type" value="Genomic_DNA"/>
</dbReference>
<dbReference type="EMBL" id="CH471054">
    <property type="protein sequence ID" value="EAW96998.1"/>
    <property type="molecule type" value="Genomic_DNA"/>
</dbReference>
<dbReference type="EMBL" id="BC011911">
    <property type="protein sequence ID" value="AAH11911.1"/>
    <property type="molecule type" value="mRNA"/>
</dbReference>
<dbReference type="EMBL" id="BC013677">
    <property type="protein sequence ID" value="AAH13677.1"/>
    <property type="molecule type" value="mRNA"/>
</dbReference>
<dbReference type="EMBL" id="BC032584">
    <property type="protein sequence ID" value="AAH32584.1"/>
    <property type="molecule type" value="mRNA"/>
</dbReference>
<dbReference type="EMBL" id="BC044211">
    <property type="protein sequence ID" value="AAH44211.1"/>
    <property type="molecule type" value="mRNA"/>
</dbReference>
<dbReference type="EMBL" id="Y12331">
    <property type="protein sequence ID" value="CAA72999.1"/>
    <property type="molecule type" value="Genomic_DNA"/>
</dbReference>
<dbReference type="EMBL" id="U23143">
    <property type="protein sequence ID" value="AAA64572.1"/>
    <property type="molecule type" value="Genomic_DNA"/>
</dbReference>
<dbReference type="EMBL" id="L11932">
    <property type="protein sequence ID" value="AAA63258.1"/>
    <property type="molecule type" value="mRNA"/>
</dbReference>
<dbReference type="CCDS" id="CCDS53805.1">
    <molecule id="P34897-3"/>
</dbReference>
<dbReference type="CCDS" id="CCDS55837.1">
    <molecule id="P34897-2"/>
</dbReference>
<dbReference type="CCDS" id="CCDS8934.1">
    <molecule id="P34897-1"/>
</dbReference>
<dbReference type="PIR" id="B46746">
    <property type="entry name" value="B46746"/>
</dbReference>
<dbReference type="RefSeq" id="NP_001159828.1">
    <molecule id="P34897-2"/>
    <property type="nucleotide sequence ID" value="NM_001166356.2"/>
</dbReference>
<dbReference type="RefSeq" id="NP_001159829.1">
    <molecule id="P34897-3"/>
    <property type="nucleotide sequence ID" value="NM_001166357.1"/>
</dbReference>
<dbReference type="RefSeq" id="NP_001159830.1">
    <molecule id="P34897-3"/>
    <property type="nucleotide sequence ID" value="NM_001166358.2"/>
</dbReference>
<dbReference type="RefSeq" id="NP_001159831.1">
    <molecule id="P34897-3"/>
    <property type="nucleotide sequence ID" value="NM_001166359.1"/>
</dbReference>
<dbReference type="RefSeq" id="NP_005403.2">
    <molecule id="P34897-1"/>
    <property type="nucleotide sequence ID" value="NM_005412.5"/>
</dbReference>
<dbReference type="PDB" id="4PVF">
    <property type="method" value="X-ray"/>
    <property type="resolution" value="2.60 A"/>
    <property type="chains" value="A/B=22-504"/>
</dbReference>
<dbReference type="PDB" id="5V7I">
    <property type="method" value="X-ray"/>
    <property type="resolution" value="2.47 A"/>
    <property type="chains" value="A/B=29-504"/>
</dbReference>
<dbReference type="PDB" id="5X3V">
    <property type="method" value="X-ray"/>
    <property type="resolution" value="2.85 A"/>
    <property type="chains" value="A/B=22-504"/>
</dbReference>
<dbReference type="PDB" id="6DK3">
    <property type="method" value="X-ray"/>
    <property type="resolution" value="2.04 A"/>
    <property type="chains" value="A=17-504"/>
</dbReference>
<dbReference type="PDB" id="6H3C">
    <property type="method" value="EM"/>
    <property type="resolution" value="3.90 A"/>
    <property type="chains" value="E/J=17-504"/>
</dbReference>
<dbReference type="PDB" id="6M5O">
    <property type="method" value="X-ray"/>
    <property type="resolution" value="2.30 A"/>
    <property type="chains" value="A/B=17-504"/>
</dbReference>
<dbReference type="PDB" id="6QVG">
    <property type="method" value="X-ray"/>
    <property type="resolution" value="2.32 A"/>
    <property type="chains" value="A/B=1-504"/>
</dbReference>
<dbReference type="PDB" id="6QVL">
    <property type="method" value="X-ray"/>
    <property type="resolution" value="2.28 A"/>
    <property type="chains" value="A/B=1-504"/>
</dbReference>
<dbReference type="PDB" id="6R8F">
    <property type="method" value="EM"/>
    <property type="resolution" value="3.80 A"/>
    <property type="chains" value="K/L=1-504"/>
</dbReference>
<dbReference type="PDB" id="7BYI">
    <property type="method" value="X-ray"/>
    <property type="resolution" value="2.76 A"/>
    <property type="chains" value="A/B=22-504"/>
</dbReference>
<dbReference type="PDB" id="8AQL">
    <property type="method" value="X-ray"/>
    <property type="resolution" value="1.23 A"/>
    <property type="chains" value="A/B/C/D=29-504"/>
</dbReference>
<dbReference type="PDB" id="8FJT">
    <property type="method" value="X-ray"/>
    <property type="resolution" value="2.47 A"/>
    <property type="chains" value="A/B=29-504"/>
</dbReference>
<dbReference type="PDB" id="8FJU">
    <property type="method" value="X-ray"/>
    <property type="resolution" value="2.51 A"/>
    <property type="chains" value="A/B=29-504"/>
</dbReference>
<dbReference type="PDB" id="8GKS">
    <property type="method" value="X-ray"/>
    <property type="resolution" value="2.99 A"/>
    <property type="chains" value="A/B=29-504"/>
</dbReference>
<dbReference type="PDB" id="8GKT">
    <property type="method" value="X-ray"/>
    <property type="resolution" value="2.64 A"/>
    <property type="chains" value="A/B=29-504"/>
</dbReference>
<dbReference type="PDB" id="8GKU">
    <property type="method" value="X-ray"/>
    <property type="resolution" value="3.06 A"/>
    <property type="chains" value="A/B=29-504"/>
</dbReference>
<dbReference type="PDB" id="8GKW">
    <property type="method" value="X-ray"/>
    <property type="resolution" value="2.38 A"/>
    <property type="chains" value="A/B=29-504"/>
</dbReference>
<dbReference type="PDB" id="8GKY">
    <property type="method" value="X-ray"/>
    <property type="resolution" value="2.77 A"/>
    <property type="chains" value="A/B=29-504"/>
</dbReference>
<dbReference type="PDB" id="8GKZ">
    <property type="method" value="X-ray"/>
    <property type="resolution" value="2.75 A"/>
    <property type="chains" value="A/B=29-504"/>
</dbReference>
<dbReference type="PDB" id="8QI7">
    <property type="method" value="EM"/>
    <property type="resolution" value="2.90 A"/>
    <property type="chains" value="A/B/C/D=29-504"/>
</dbReference>
<dbReference type="PDB" id="8SSJ">
    <property type="method" value="X-ray"/>
    <property type="resolution" value="2.50 A"/>
    <property type="chains" value="A/B=37-504"/>
</dbReference>
<dbReference type="PDB" id="8T4O">
    <property type="method" value="X-ray"/>
    <property type="resolution" value="2.68 A"/>
    <property type="chains" value="A/B=29-504"/>
</dbReference>
<dbReference type="PDB" id="8T4P">
    <property type="method" value="X-ray"/>
    <property type="resolution" value="2.80 A"/>
    <property type="chains" value="A/B=29-504"/>
</dbReference>
<dbReference type="PDB" id="8TLC">
    <property type="method" value="X-ray"/>
    <property type="resolution" value="2.72 A"/>
    <property type="chains" value="A/B=29-504"/>
</dbReference>
<dbReference type="PDB" id="9BOX">
    <property type="method" value="X-ray"/>
    <property type="resolution" value="2.10 A"/>
    <property type="chains" value="A/B/C/D=43-504"/>
</dbReference>
<dbReference type="PDBsum" id="4PVF"/>
<dbReference type="PDBsum" id="5V7I"/>
<dbReference type="PDBsum" id="5X3V"/>
<dbReference type="PDBsum" id="6DK3"/>
<dbReference type="PDBsum" id="6H3C"/>
<dbReference type="PDBsum" id="6M5O"/>
<dbReference type="PDBsum" id="6QVG"/>
<dbReference type="PDBsum" id="6QVL"/>
<dbReference type="PDBsum" id="6R8F"/>
<dbReference type="PDBsum" id="7BYI"/>
<dbReference type="PDBsum" id="8AQL"/>
<dbReference type="PDBsum" id="8FJT"/>
<dbReference type="PDBsum" id="8FJU"/>
<dbReference type="PDBsum" id="8GKS"/>
<dbReference type="PDBsum" id="8GKT"/>
<dbReference type="PDBsum" id="8GKU"/>
<dbReference type="PDBsum" id="8GKW"/>
<dbReference type="PDBsum" id="8GKY"/>
<dbReference type="PDBsum" id="8GKZ"/>
<dbReference type="PDBsum" id="8QI7"/>
<dbReference type="PDBsum" id="8SSJ"/>
<dbReference type="PDBsum" id="8T4O"/>
<dbReference type="PDBsum" id="8T4P"/>
<dbReference type="PDBsum" id="8TLC"/>
<dbReference type="PDBsum" id="9BOX"/>
<dbReference type="EMDB" id="EMD-0132"/>
<dbReference type="EMDB" id="EMD-18436"/>
<dbReference type="EMDB" id="EMD-4759"/>
<dbReference type="EMDB" id="EMD-4760"/>
<dbReference type="SMR" id="P34897"/>
<dbReference type="BioGRID" id="112368">
    <property type="interactions" value="694"/>
</dbReference>
<dbReference type="ComplexPortal" id="CPX-9341">
    <molecule id="P34897-3"/>
    <property type="entry name" value="BRISC-SHMT2 complex"/>
</dbReference>
<dbReference type="CORUM" id="P34897"/>
<dbReference type="FunCoup" id="P34897">
    <property type="interactions" value="1979"/>
</dbReference>
<dbReference type="IntAct" id="P34897">
    <property type="interactions" value="141"/>
</dbReference>
<dbReference type="MINT" id="P34897"/>
<dbReference type="STRING" id="9606.ENSP00000333667"/>
<dbReference type="BindingDB" id="P34897"/>
<dbReference type="ChEMBL" id="CHEMBL4295747"/>
<dbReference type="DrugBank" id="DB11638">
    <property type="generic name" value="Artenimol"/>
</dbReference>
<dbReference type="DrugBank" id="DB00145">
    <property type="generic name" value="Glycine"/>
</dbReference>
<dbReference type="DrugBank" id="DB00114">
    <property type="generic name" value="Pyridoxal phosphate"/>
</dbReference>
<dbReference type="DrugBank" id="DB00116">
    <property type="generic name" value="Tetrahydrofolic acid"/>
</dbReference>
<dbReference type="DrugCentral" id="P34897"/>
<dbReference type="GlyGen" id="P34897">
    <property type="glycosylation" value="2 sites, 1 O-linked glycan (1 site)"/>
</dbReference>
<dbReference type="iPTMnet" id="P34897"/>
<dbReference type="MetOSite" id="P34897"/>
<dbReference type="PhosphoSitePlus" id="P34897"/>
<dbReference type="SwissPalm" id="P34897"/>
<dbReference type="BioMuta" id="SHMT2"/>
<dbReference type="DMDM" id="6226865"/>
<dbReference type="jPOST" id="P34897"/>
<dbReference type="MassIVE" id="P34897"/>
<dbReference type="PaxDb" id="9606-ENSP00000333667"/>
<dbReference type="PeptideAtlas" id="P34897"/>
<dbReference type="ProteomicsDB" id="54948">
    <molecule id="P34897-1"/>
</dbReference>
<dbReference type="ProteomicsDB" id="54949">
    <molecule id="P34897-2"/>
</dbReference>
<dbReference type="ProteomicsDB" id="54950">
    <molecule id="P34897-3"/>
</dbReference>
<dbReference type="Pumba" id="P34897"/>
<dbReference type="Antibodypedia" id="16145">
    <property type="antibodies" value="267 antibodies from 30 providers"/>
</dbReference>
<dbReference type="DNASU" id="6472"/>
<dbReference type="Ensembl" id="ENST00000328923.8">
    <molecule id="P34897-1"/>
    <property type="protein sequence ID" value="ENSP00000333667.3"/>
    <property type="gene ID" value="ENSG00000182199.11"/>
</dbReference>
<dbReference type="Ensembl" id="ENST00000414700.7">
    <molecule id="P34897-3"/>
    <property type="protein sequence ID" value="ENSP00000406881.3"/>
    <property type="gene ID" value="ENSG00000182199.11"/>
</dbReference>
<dbReference type="Ensembl" id="ENST00000449049.7">
    <molecule id="P34897-3"/>
    <property type="protein sequence ID" value="ENSP00000413770.3"/>
    <property type="gene ID" value="ENSG00000182199.11"/>
</dbReference>
<dbReference type="Ensembl" id="ENST00000553474.5">
    <molecule id="P34897-3"/>
    <property type="protein sequence ID" value="ENSP00000452419.1"/>
    <property type="gene ID" value="ENSG00000182199.11"/>
</dbReference>
<dbReference type="Ensembl" id="ENST00000557487.5">
    <molecule id="P34897-2"/>
    <property type="protein sequence ID" value="ENSP00000452315.1"/>
    <property type="gene ID" value="ENSG00000182199.11"/>
</dbReference>
<dbReference type="GeneID" id="6472"/>
<dbReference type="KEGG" id="hsa:6472"/>
<dbReference type="MANE-Select" id="ENST00000328923.8">
    <property type="protein sequence ID" value="ENSP00000333667.3"/>
    <property type="RefSeq nucleotide sequence ID" value="NM_005412.6"/>
    <property type="RefSeq protein sequence ID" value="NP_005403.2"/>
</dbReference>
<dbReference type="UCSC" id="uc001sni.3">
    <molecule id="P34897-1"/>
    <property type="organism name" value="human"/>
</dbReference>
<dbReference type="AGR" id="HGNC:10852"/>
<dbReference type="CTD" id="6472"/>
<dbReference type="DisGeNET" id="6472"/>
<dbReference type="GeneCards" id="SHMT2"/>
<dbReference type="HGNC" id="HGNC:10852">
    <property type="gene designation" value="SHMT2"/>
</dbReference>
<dbReference type="HPA" id="ENSG00000182199">
    <property type="expression patterns" value="Tissue enhanced (liver)"/>
</dbReference>
<dbReference type="MalaCards" id="SHMT2"/>
<dbReference type="MIM" id="138450">
    <property type="type" value="gene"/>
</dbReference>
<dbReference type="MIM" id="619121">
    <property type="type" value="phenotype"/>
</dbReference>
<dbReference type="neXtProt" id="NX_P34897"/>
<dbReference type="OpenTargets" id="ENSG00000182199"/>
<dbReference type="PharmGKB" id="PA35755"/>
<dbReference type="VEuPathDB" id="HostDB:ENSG00000182199"/>
<dbReference type="eggNOG" id="KOG2467">
    <property type="taxonomic scope" value="Eukaryota"/>
</dbReference>
<dbReference type="GeneTree" id="ENSGT00390000002762"/>
<dbReference type="HOGENOM" id="CLU_022477_0_1_1"/>
<dbReference type="InParanoid" id="P34897"/>
<dbReference type="OMA" id="TQPFFSQ"/>
<dbReference type="OrthoDB" id="10265628at2759"/>
<dbReference type="PAN-GO" id="P34897">
    <property type="GO annotations" value="21 GO annotations based on evolutionary models"/>
</dbReference>
<dbReference type="PhylomeDB" id="P34897"/>
<dbReference type="TreeFam" id="TF314667"/>
<dbReference type="BioCyc" id="MetaCyc:HS00049-MONOMER"/>
<dbReference type="BRENDA" id="2.1.2.1">
    <property type="organism ID" value="2681"/>
</dbReference>
<dbReference type="PathwayCommons" id="P34897"/>
<dbReference type="Reactome" id="R-HSA-196757">
    <property type="pathway name" value="Metabolism of folate and pterines"/>
</dbReference>
<dbReference type="Reactome" id="R-HSA-9013408">
    <property type="pathway name" value="RHOG GTPase cycle"/>
</dbReference>
<dbReference type="Reactome" id="R-HSA-9837999">
    <property type="pathway name" value="Mitochondrial protein degradation"/>
</dbReference>
<dbReference type="SABIO-RK" id="P34897"/>
<dbReference type="SignaLink" id="P34897"/>
<dbReference type="SIGNOR" id="P34897"/>
<dbReference type="UniPathway" id="UPA00193"/>
<dbReference type="BioGRID-ORCS" id="6472">
    <property type="hits" value="43 hits in 1160 CRISPR screens"/>
</dbReference>
<dbReference type="CD-CODE" id="91857CE7">
    <property type="entry name" value="Nucleolus"/>
</dbReference>
<dbReference type="CD-CODE" id="FB4E32DD">
    <property type="entry name" value="Presynaptic clusters and postsynaptic densities"/>
</dbReference>
<dbReference type="ChiTaRS" id="SHMT2">
    <property type="organism name" value="human"/>
</dbReference>
<dbReference type="EvolutionaryTrace" id="P34897"/>
<dbReference type="GenomeRNAi" id="6472"/>
<dbReference type="Pharos" id="P34897">
    <property type="development level" value="Tchem"/>
</dbReference>
<dbReference type="PRO" id="PR:P34897"/>
<dbReference type="Proteomes" id="UP000005640">
    <property type="component" value="Chromosome 12"/>
</dbReference>
<dbReference type="RNAct" id="P34897">
    <property type="molecule type" value="protein"/>
</dbReference>
<dbReference type="Bgee" id="ENSG00000182199">
    <property type="expression patterns" value="Expressed in tendon of biceps brachii and 209 other cell types or tissues"/>
</dbReference>
<dbReference type="ExpressionAtlas" id="P34897">
    <property type="expression patterns" value="baseline and differential"/>
</dbReference>
<dbReference type="GO" id="GO:0070552">
    <property type="term" value="C:BRISC complex"/>
    <property type="evidence" value="ECO:0000314"/>
    <property type="project" value="UniProtKB"/>
</dbReference>
<dbReference type="GO" id="GO:0005737">
    <property type="term" value="C:cytoplasm"/>
    <property type="evidence" value="ECO:0000314"/>
    <property type="project" value="BHF-UCL"/>
</dbReference>
<dbReference type="GO" id="GO:0070062">
    <property type="term" value="C:extracellular exosome"/>
    <property type="evidence" value="ECO:0007005"/>
    <property type="project" value="UniProtKB"/>
</dbReference>
<dbReference type="GO" id="GO:0015630">
    <property type="term" value="C:microtubule cytoskeleton"/>
    <property type="evidence" value="ECO:0000314"/>
    <property type="project" value="HPA"/>
</dbReference>
<dbReference type="GO" id="GO:0005743">
    <property type="term" value="C:mitochondrial inner membrane"/>
    <property type="evidence" value="ECO:0000314"/>
    <property type="project" value="UniProtKB"/>
</dbReference>
<dbReference type="GO" id="GO:0005759">
    <property type="term" value="C:mitochondrial matrix"/>
    <property type="evidence" value="ECO:0000314"/>
    <property type="project" value="UniProtKB"/>
</dbReference>
<dbReference type="GO" id="GO:0042645">
    <property type="term" value="C:mitochondrial nucleoid"/>
    <property type="evidence" value="ECO:0000314"/>
    <property type="project" value="BHF-UCL"/>
</dbReference>
<dbReference type="GO" id="GO:0005739">
    <property type="term" value="C:mitochondrion"/>
    <property type="evidence" value="ECO:0000314"/>
    <property type="project" value="BHF-UCL"/>
</dbReference>
<dbReference type="GO" id="GO:0005634">
    <property type="term" value="C:nucleus"/>
    <property type="evidence" value="ECO:0000314"/>
    <property type="project" value="BHF-UCL"/>
</dbReference>
<dbReference type="GO" id="GO:0016597">
    <property type="term" value="F:amino acid binding"/>
    <property type="evidence" value="ECO:0007669"/>
    <property type="project" value="Ensembl"/>
</dbReference>
<dbReference type="GO" id="GO:0003682">
    <property type="term" value="F:chromatin binding"/>
    <property type="evidence" value="ECO:0000314"/>
    <property type="project" value="UniProtKB"/>
</dbReference>
<dbReference type="GO" id="GO:0004372">
    <property type="term" value="F:glycine hydroxymethyltransferase activity"/>
    <property type="evidence" value="ECO:0000314"/>
    <property type="project" value="UniProtKB"/>
</dbReference>
<dbReference type="GO" id="GO:0042802">
    <property type="term" value="F:identical protein binding"/>
    <property type="evidence" value="ECO:0000353"/>
    <property type="project" value="IntAct"/>
</dbReference>
<dbReference type="GO" id="GO:0008732">
    <property type="term" value="F:L-allo-threonine aldolase activity"/>
    <property type="evidence" value="ECO:0007669"/>
    <property type="project" value="Ensembl"/>
</dbReference>
<dbReference type="GO" id="GO:0030170">
    <property type="term" value="F:pyridoxal phosphate binding"/>
    <property type="evidence" value="ECO:0000314"/>
    <property type="project" value="UniProtKB"/>
</dbReference>
<dbReference type="GO" id="GO:0015943">
    <property type="term" value="P:formate biosynthetic process"/>
    <property type="evidence" value="ECO:0007669"/>
    <property type="project" value="Ensembl"/>
</dbReference>
<dbReference type="GO" id="GO:0019264">
    <property type="term" value="P:glycine biosynthetic process from serine"/>
    <property type="evidence" value="ECO:0000318"/>
    <property type="project" value="GO_Central"/>
</dbReference>
<dbReference type="GO" id="GO:0006544">
    <property type="term" value="P:glycine metabolic process"/>
    <property type="evidence" value="ECO:0000314"/>
    <property type="project" value="UniProtKB"/>
</dbReference>
<dbReference type="GO" id="GO:0006564">
    <property type="term" value="P:L-serine biosynthetic process"/>
    <property type="evidence" value="ECO:0007669"/>
    <property type="project" value="Ensembl"/>
</dbReference>
<dbReference type="GO" id="GO:0006563">
    <property type="term" value="P:L-serine metabolic process"/>
    <property type="evidence" value="ECO:0000314"/>
    <property type="project" value="UniProtKB"/>
</dbReference>
<dbReference type="GO" id="GO:0006730">
    <property type="term" value="P:one-carbon metabolic process"/>
    <property type="evidence" value="ECO:0000314"/>
    <property type="project" value="UniProtKB"/>
</dbReference>
<dbReference type="GO" id="GO:0008284">
    <property type="term" value="P:positive regulation of cell population proliferation"/>
    <property type="evidence" value="ECO:0007669"/>
    <property type="project" value="Ensembl"/>
</dbReference>
<dbReference type="GO" id="GO:0051289">
    <property type="term" value="P:protein homotetramerization"/>
    <property type="evidence" value="ECO:0000314"/>
    <property type="project" value="UniProtKB"/>
</dbReference>
<dbReference type="GO" id="GO:0070536">
    <property type="term" value="P:protein K63-linked deubiquitination"/>
    <property type="evidence" value="ECO:0000315"/>
    <property type="project" value="UniProtKB"/>
</dbReference>
<dbReference type="GO" id="GO:0051262">
    <property type="term" value="P:protein tetramerization"/>
    <property type="evidence" value="ECO:0000314"/>
    <property type="project" value="UniProtKB"/>
</dbReference>
<dbReference type="GO" id="GO:1903715">
    <property type="term" value="P:regulation of aerobic respiration"/>
    <property type="evidence" value="ECO:0000315"/>
    <property type="project" value="UniProtKB"/>
</dbReference>
<dbReference type="GO" id="GO:0070129">
    <property type="term" value="P:regulation of mitochondrial translation"/>
    <property type="evidence" value="ECO:0000315"/>
    <property type="project" value="UniProtKB"/>
</dbReference>
<dbReference type="GO" id="GO:0002082">
    <property type="term" value="P:regulation of oxidative phosphorylation"/>
    <property type="evidence" value="ECO:0000315"/>
    <property type="project" value="UniProtKB"/>
</dbReference>
<dbReference type="GO" id="GO:0034340">
    <property type="term" value="P:response to type I interferon"/>
    <property type="evidence" value="ECO:0000314"/>
    <property type="project" value="UniProtKB"/>
</dbReference>
<dbReference type="GO" id="GO:0035999">
    <property type="term" value="P:tetrahydrofolate interconversion"/>
    <property type="evidence" value="ECO:0007669"/>
    <property type="project" value="UniProtKB-UniPathway"/>
</dbReference>
<dbReference type="GO" id="GO:0046653">
    <property type="term" value="P:tetrahydrofolate metabolic process"/>
    <property type="evidence" value="ECO:0000314"/>
    <property type="project" value="UniProtKB"/>
</dbReference>
<dbReference type="CDD" id="cd00378">
    <property type="entry name" value="SHMT"/>
    <property type="match status" value="1"/>
</dbReference>
<dbReference type="FunFam" id="3.40.640.10:FF:000097">
    <property type="entry name" value="Serine hydroxymethyltransferase"/>
    <property type="match status" value="1"/>
</dbReference>
<dbReference type="FunFam" id="3.90.1150.10:FF:000005">
    <property type="entry name" value="Serine hydroxymethyltransferase"/>
    <property type="match status" value="1"/>
</dbReference>
<dbReference type="FunFam" id="3.90.1150.10:FF:000048">
    <property type="entry name" value="Serine hydroxymethyltransferase, mitochondrial"/>
    <property type="match status" value="1"/>
</dbReference>
<dbReference type="Gene3D" id="3.90.1150.10">
    <property type="entry name" value="Aspartate Aminotransferase, domain 1"/>
    <property type="match status" value="1"/>
</dbReference>
<dbReference type="Gene3D" id="3.40.640.10">
    <property type="entry name" value="Type I PLP-dependent aspartate aminotransferase-like (Major domain)"/>
    <property type="match status" value="1"/>
</dbReference>
<dbReference type="HAMAP" id="MF_00051">
    <property type="entry name" value="SHMT"/>
    <property type="match status" value="1"/>
</dbReference>
<dbReference type="InterPro" id="IPR015424">
    <property type="entry name" value="PyrdxlP-dep_Trfase"/>
</dbReference>
<dbReference type="InterPro" id="IPR015421">
    <property type="entry name" value="PyrdxlP-dep_Trfase_major"/>
</dbReference>
<dbReference type="InterPro" id="IPR015422">
    <property type="entry name" value="PyrdxlP-dep_Trfase_small"/>
</dbReference>
<dbReference type="InterPro" id="IPR001085">
    <property type="entry name" value="Ser_HO-MeTrfase"/>
</dbReference>
<dbReference type="InterPro" id="IPR049943">
    <property type="entry name" value="Ser_HO-MeTrfase-like"/>
</dbReference>
<dbReference type="InterPro" id="IPR019798">
    <property type="entry name" value="Ser_HO-MeTrfase_PLP_BS"/>
</dbReference>
<dbReference type="InterPro" id="IPR039429">
    <property type="entry name" value="SHMT-like_dom"/>
</dbReference>
<dbReference type="NCBIfam" id="NF000586">
    <property type="entry name" value="PRK00011.1"/>
    <property type="match status" value="1"/>
</dbReference>
<dbReference type="PANTHER" id="PTHR11680">
    <property type="entry name" value="SERINE HYDROXYMETHYLTRANSFERASE"/>
    <property type="match status" value="1"/>
</dbReference>
<dbReference type="PANTHER" id="PTHR11680:SF28">
    <property type="entry name" value="SERINE HYDROXYMETHYLTRANSFERASE, MITOCHONDRIAL"/>
    <property type="match status" value="1"/>
</dbReference>
<dbReference type="Pfam" id="PF00464">
    <property type="entry name" value="SHMT"/>
    <property type="match status" value="1"/>
</dbReference>
<dbReference type="PIRSF" id="PIRSF000412">
    <property type="entry name" value="SHMT"/>
    <property type="match status" value="1"/>
</dbReference>
<dbReference type="SUPFAM" id="SSF53383">
    <property type="entry name" value="PLP-dependent transferases"/>
    <property type="match status" value="1"/>
</dbReference>
<dbReference type="PROSITE" id="PS00096">
    <property type="entry name" value="SHMT"/>
    <property type="match status" value="1"/>
</dbReference>
<reference key="1">
    <citation type="journal article" date="2004" name="Nat. Genet.">
        <title>Complete sequencing and characterization of 21,243 full-length human cDNAs.</title>
        <authorList>
            <person name="Ota T."/>
            <person name="Suzuki Y."/>
            <person name="Nishikawa T."/>
            <person name="Otsuki T."/>
            <person name="Sugiyama T."/>
            <person name="Irie R."/>
            <person name="Wakamatsu A."/>
            <person name="Hayashi K."/>
            <person name="Sato H."/>
            <person name="Nagai K."/>
            <person name="Kimura K."/>
            <person name="Makita H."/>
            <person name="Sekine M."/>
            <person name="Obayashi M."/>
            <person name="Nishi T."/>
            <person name="Shibahara T."/>
            <person name="Tanaka T."/>
            <person name="Ishii S."/>
            <person name="Yamamoto J."/>
            <person name="Saito K."/>
            <person name="Kawai Y."/>
            <person name="Isono Y."/>
            <person name="Nakamura Y."/>
            <person name="Nagahari K."/>
            <person name="Murakami K."/>
            <person name="Yasuda T."/>
            <person name="Iwayanagi T."/>
            <person name="Wagatsuma M."/>
            <person name="Shiratori A."/>
            <person name="Sudo H."/>
            <person name="Hosoiri T."/>
            <person name="Kaku Y."/>
            <person name="Kodaira H."/>
            <person name="Kondo H."/>
            <person name="Sugawara M."/>
            <person name="Takahashi M."/>
            <person name="Kanda K."/>
            <person name="Yokoi T."/>
            <person name="Furuya T."/>
            <person name="Kikkawa E."/>
            <person name="Omura Y."/>
            <person name="Abe K."/>
            <person name="Kamihara K."/>
            <person name="Katsuta N."/>
            <person name="Sato K."/>
            <person name="Tanikawa M."/>
            <person name="Yamazaki M."/>
            <person name="Ninomiya K."/>
            <person name="Ishibashi T."/>
            <person name="Yamashita H."/>
            <person name="Murakawa K."/>
            <person name="Fujimori K."/>
            <person name="Tanai H."/>
            <person name="Kimata M."/>
            <person name="Watanabe M."/>
            <person name="Hiraoka S."/>
            <person name="Chiba Y."/>
            <person name="Ishida S."/>
            <person name="Ono Y."/>
            <person name="Takiguchi S."/>
            <person name="Watanabe S."/>
            <person name="Yosida M."/>
            <person name="Hotuta T."/>
            <person name="Kusano J."/>
            <person name="Kanehori K."/>
            <person name="Takahashi-Fujii A."/>
            <person name="Hara H."/>
            <person name="Tanase T.-O."/>
            <person name="Nomura Y."/>
            <person name="Togiya S."/>
            <person name="Komai F."/>
            <person name="Hara R."/>
            <person name="Takeuchi K."/>
            <person name="Arita M."/>
            <person name="Imose N."/>
            <person name="Musashino K."/>
            <person name="Yuuki H."/>
            <person name="Oshima A."/>
            <person name="Sasaki N."/>
            <person name="Aotsuka S."/>
            <person name="Yoshikawa Y."/>
            <person name="Matsunawa H."/>
            <person name="Ichihara T."/>
            <person name="Shiohata N."/>
            <person name="Sano S."/>
            <person name="Moriya S."/>
            <person name="Momiyama H."/>
            <person name="Satoh N."/>
            <person name="Takami S."/>
            <person name="Terashima Y."/>
            <person name="Suzuki O."/>
            <person name="Nakagawa S."/>
            <person name="Senoh A."/>
            <person name="Mizoguchi H."/>
            <person name="Goto Y."/>
            <person name="Shimizu F."/>
            <person name="Wakebe H."/>
            <person name="Hishigaki H."/>
            <person name="Watanabe T."/>
            <person name="Sugiyama A."/>
            <person name="Takemoto M."/>
            <person name="Kawakami B."/>
            <person name="Yamazaki M."/>
            <person name="Watanabe K."/>
            <person name="Kumagai A."/>
            <person name="Itakura S."/>
            <person name="Fukuzumi Y."/>
            <person name="Fujimori Y."/>
            <person name="Komiyama M."/>
            <person name="Tashiro H."/>
            <person name="Tanigami A."/>
            <person name="Fujiwara T."/>
            <person name="Ono T."/>
            <person name="Yamada K."/>
            <person name="Fujii Y."/>
            <person name="Ozaki K."/>
            <person name="Hirao M."/>
            <person name="Ohmori Y."/>
            <person name="Kawabata A."/>
            <person name="Hikiji T."/>
            <person name="Kobatake N."/>
            <person name="Inagaki H."/>
            <person name="Ikema Y."/>
            <person name="Okamoto S."/>
            <person name="Okitani R."/>
            <person name="Kawakami T."/>
            <person name="Noguchi S."/>
            <person name="Itoh T."/>
            <person name="Shigeta K."/>
            <person name="Senba T."/>
            <person name="Matsumura K."/>
            <person name="Nakajima Y."/>
            <person name="Mizuno T."/>
            <person name="Morinaga M."/>
            <person name="Sasaki M."/>
            <person name="Togashi T."/>
            <person name="Oyama M."/>
            <person name="Hata H."/>
            <person name="Watanabe M."/>
            <person name="Komatsu T."/>
            <person name="Mizushima-Sugano J."/>
            <person name="Satoh T."/>
            <person name="Shirai Y."/>
            <person name="Takahashi Y."/>
            <person name="Nakagawa K."/>
            <person name="Okumura K."/>
            <person name="Nagase T."/>
            <person name="Nomura N."/>
            <person name="Kikuchi H."/>
            <person name="Masuho Y."/>
            <person name="Yamashita R."/>
            <person name="Nakai K."/>
            <person name="Yada T."/>
            <person name="Nakamura Y."/>
            <person name="Ohara O."/>
            <person name="Isogai T."/>
            <person name="Sugano S."/>
        </authorList>
    </citation>
    <scope>NUCLEOTIDE SEQUENCE [LARGE SCALE MRNA] (ISOFORM 3)</scope>
</reference>
<reference key="2">
    <citation type="submission" date="2003-05" db="EMBL/GenBank/DDBJ databases">
        <title>Cloning of human full-length CDSs in BD Creator(TM) system donor vector.</title>
        <authorList>
            <person name="Kalnine N."/>
            <person name="Chen X."/>
            <person name="Rolfs A."/>
            <person name="Halleck A."/>
            <person name="Hines L."/>
            <person name="Eisenstein S."/>
            <person name="Koundinya M."/>
            <person name="Raphael J."/>
            <person name="Moreira D."/>
            <person name="Kelley T."/>
            <person name="LaBaer J."/>
            <person name="Lin Y."/>
            <person name="Phelan M."/>
            <person name="Farmer A."/>
        </authorList>
    </citation>
    <scope>NUCLEOTIDE SEQUENCE [LARGE SCALE MRNA] (ISOFORM 1)</scope>
</reference>
<reference key="3">
    <citation type="journal article" date="2006" name="Nature">
        <title>The finished DNA sequence of human chromosome 12.</title>
        <authorList>
            <person name="Scherer S.E."/>
            <person name="Muzny D.M."/>
            <person name="Buhay C.J."/>
            <person name="Chen R."/>
            <person name="Cree A."/>
            <person name="Ding Y."/>
            <person name="Dugan-Rocha S."/>
            <person name="Gill R."/>
            <person name="Gunaratne P."/>
            <person name="Harris R.A."/>
            <person name="Hawes A.C."/>
            <person name="Hernandez J."/>
            <person name="Hodgson A.V."/>
            <person name="Hume J."/>
            <person name="Jackson A."/>
            <person name="Khan Z.M."/>
            <person name="Kovar-Smith C."/>
            <person name="Lewis L.R."/>
            <person name="Lozado R.J."/>
            <person name="Metzker M.L."/>
            <person name="Milosavljevic A."/>
            <person name="Miner G.R."/>
            <person name="Montgomery K.T."/>
            <person name="Morgan M.B."/>
            <person name="Nazareth L.V."/>
            <person name="Scott G."/>
            <person name="Sodergren E."/>
            <person name="Song X.-Z."/>
            <person name="Steffen D."/>
            <person name="Lovering R.C."/>
            <person name="Wheeler D.A."/>
            <person name="Worley K.C."/>
            <person name="Yuan Y."/>
            <person name="Zhang Z."/>
            <person name="Adams C.Q."/>
            <person name="Ansari-Lari M.A."/>
            <person name="Ayele M."/>
            <person name="Brown M.J."/>
            <person name="Chen G."/>
            <person name="Chen Z."/>
            <person name="Clerc-Blankenburg K.P."/>
            <person name="Davis C."/>
            <person name="Delgado O."/>
            <person name="Dinh H.H."/>
            <person name="Draper H."/>
            <person name="Gonzalez-Garay M.L."/>
            <person name="Havlak P."/>
            <person name="Jackson L.R."/>
            <person name="Jacob L.S."/>
            <person name="Kelly S.H."/>
            <person name="Li L."/>
            <person name="Li Z."/>
            <person name="Liu J."/>
            <person name="Liu W."/>
            <person name="Lu J."/>
            <person name="Maheshwari M."/>
            <person name="Nguyen B.-V."/>
            <person name="Okwuonu G.O."/>
            <person name="Pasternak S."/>
            <person name="Perez L.M."/>
            <person name="Plopper F.J.H."/>
            <person name="Santibanez J."/>
            <person name="Shen H."/>
            <person name="Tabor P.E."/>
            <person name="Verduzco D."/>
            <person name="Waldron L."/>
            <person name="Wang Q."/>
            <person name="Williams G.A."/>
            <person name="Zhang J."/>
            <person name="Zhou J."/>
            <person name="Allen C.C."/>
            <person name="Amin A.G."/>
            <person name="Anyalebechi V."/>
            <person name="Bailey M."/>
            <person name="Barbaria J.A."/>
            <person name="Bimage K.E."/>
            <person name="Bryant N.P."/>
            <person name="Burch P.E."/>
            <person name="Burkett C.E."/>
            <person name="Burrell K.L."/>
            <person name="Calderon E."/>
            <person name="Cardenas V."/>
            <person name="Carter K."/>
            <person name="Casias K."/>
            <person name="Cavazos I."/>
            <person name="Cavazos S.R."/>
            <person name="Ceasar H."/>
            <person name="Chacko J."/>
            <person name="Chan S.N."/>
            <person name="Chavez D."/>
            <person name="Christopoulos C."/>
            <person name="Chu J."/>
            <person name="Cockrell R."/>
            <person name="Cox C.D."/>
            <person name="Dang M."/>
            <person name="Dathorne S.R."/>
            <person name="David R."/>
            <person name="Davis C.M."/>
            <person name="Davy-Carroll L."/>
            <person name="Deshazo D.R."/>
            <person name="Donlin J.E."/>
            <person name="D'Souza L."/>
            <person name="Eaves K.A."/>
            <person name="Egan A."/>
            <person name="Emery-Cohen A.J."/>
            <person name="Escotto M."/>
            <person name="Flagg N."/>
            <person name="Forbes L.D."/>
            <person name="Gabisi A.M."/>
            <person name="Garza M."/>
            <person name="Hamilton C."/>
            <person name="Henderson N."/>
            <person name="Hernandez O."/>
            <person name="Hines S."/>
            <person name="Hogues M.E."/>
            <person name="Huang M."/>
            <person name="Idlebird D.G."/>
            <person name="Johnson R."/>
            <person name="Jolivet A."/>
            <person name="Jones S."/>
            <person name="Kagan R."/>
            <person name="King L.M."/>
            <person name="Leal B."/>
            <person name="Lebow H."/>
            <person name="Lee S."/>
            <person name="LeVan J.M."/>
            <person name="Lewis L.C."/>
            <person name="London P."/>
            <person name="Lorensuhewa L.M."/>
            <person name="Loulseged H."/>
            <person name="Lovett D.A."/>
            <person name="Lucier A."/>
            <person name="Lucier R.L."/>
            <person name="Ma J."/>
            <person name="Madu R.C."/>
            <person name="Mapua P."/>
            <person name="Martindale A.D."/>
            <person name="Martinez E."/>
            <person name="Massey E."/>
            <person name="Mawhiney S."/>
            <person name="Meador M.G."/>
            <person name="Mendez S."/>
            <person name="Mercado C."/>
            <person name="Mercado I.C."/>
            <person name="Merritt C.E."/>
            <person name="Miner Z.L."/>
            <person name="Minja E."/>
            <person name="Mitchell T."/>
            <person name="Mohabbat F."/>
            <person name="Mohabbat K."/>
            <person name="Montgomery B."/>
            <person name="Moore N."/>
            <person name="Morris S."/>
            <person name="Munidasa M."/>
            <person name="Ngo R.N."/>
            <person name="Nguyen N.B."/>
            <person name="Nickerson E."/>
            <person name="Nwaokelemeh O.O."/>
            <person name="Nwokenkwo S."/>
            <person name="Obregon M."/>
            <person name="Oguh M."/>
            <person name="Oragunye N."/>
            <person name="Oviedo R.J."/>
            <person name="Parish B.J."/>
            <person name="Parker D.N."/>
            <person name="Parrish J."/>
            <person name="Parks K.L."/>
            <person name="Paul H.A."/>
            <person name="Payton B.A."/>
            <person name="Perez A."/>
            <person name="Perrin W."/>
            <person name="Pickens A."/>
            <person name="Primus E.L."/>
            <person name="Pu L.-L."/>
            <person name="Puazo M."/>
            <person name="Quiles M.M."/>
            <person name="Quiroz J.B."/>
            <person name="Rabata D."/>
            <person name="Reeves K."/>
            <person name="Ruiz S.J."/>
            <person name="Shao H."/>
            <person name="Sisson I."/>
            <person name="Sonaike T."/>
            <person name="Sorelle R.P."/>
            <person name="Sutton A.E."/>
            <person name="Svatek A.F."/>
            <person name="Svetz L.A."/>
            <person name="Tamerisa K.S."/>
            <person name="Taylor T.R."/>
            <person name="Teague B."/>
            <person name="Thomas N."/>
            <person name="Thorn R.D."/>
            <person name="Trejos Z.Y."/>
            <person name="Trevino B.K."/>
            <person name="Ukegbu O.N."/>
            <person name="Urban J.B."/>
            <person name="Vasquez L.I."/>
            <person name="Vera V.A."/>
            <person name="Villasana D.M."/>
            <person name="Wang L."/>
            <person name="Ward-Moore S."/>
            <person name="Warren J.T."/>
            <person name="Wei X."/>
            <person name="White F."/>
            <person name="Williamson A.L."/>
            <person name="Wleczyk R."/>
            <person name="Wooden H.S."/>
            <person name="Wooden S.H."/>
            <person name="Yen J."/>
            <person name="Yoon L."/>
            <person name="Yoon V."/>
            <person name="Zorrilla S.E."/>
            <person name="Nelson D."/>
            <person name="Kucherlapati R."/>
            <person name="Weinstock G."/>
            <person name="Gibbs R.A."/>
        </authorList>
    </citation>
    <scope>NUCLEOTIDE SEQUENCE [LARGE SCALE GENOMIC DNA]</scope>
</reference>
<reference key="4">
    <citation type="submission" date="2005-07" db="EMBL/GenBank/DDBJ databases">
        <authorList>
            <person name="Mural R.J."/>
            <person name="Istrail S."/>
            <person name="Sutton G."/>
            <person name="Florea L."/>
            <person name="Halpern A.L."/>
            <person name="Mobarry C.M."/>
            <person name="Lippert R."/>
            <person name="Walenz B."/>
            <person name="Shatkay H."/>
            <person name="Dew I."/>
            <person name="Miller J.R."/>
            <person name="Flanigan M.J."/>
            <person name="Edwards N.J."/>
            <person name="Bolanos R."/>
            <person name="Fasulo D."/>
            <person name="Halldorsson B.V."/>
            <person name="Hannenhalli S."/>
            <person name="Turner R."/>
            <person name="Yooseph S."/>
            <person name="Lu F."/>
            <person name="Nusskern D.R."/>
            <person name="Shue B.C."/>
            <person name="Zheng X.H."/>
            <person name="Zhong F."/>
            <person name="Delcher A.L."/>
            <person name="Huson D.H."/>
            <person name="Kravitz S.A."/>
            <person name="Mouchard L."/>
            <person name="Reinert K."/>
            <person name="Remington K.A."/>
            <person name="Clark A.G."/>
            <person name="Waterman M.S."/>
            <person name="Eichler E.E."/>
            <person name="Adams M.D."/>
            <person name="Hunkapiller M.W."/>
            <person name="Myers E.W."/>
            <person name="Venter J.C."/>
        </authorList>
    </citation>
    <scope>NUCLEOTIDE SEQUENCE [LARGE SCALE GENOMIC DNA]</scope>
</reference>
<reference key="5">
    <citation type="journal article" date="2004" name="Genome Res.">
        <title>The status, quality, and expansion of the NIH full-length cDNA project: the Mammalian Gene Collection (MGC).</title>
        <authorList>
            <consortium name="The MGC Project Team"/>
        </authorList>
    </citation>
    <scope>NUCLEOTIDE SEQUENCE [LARGE SCALE MRNA] (ISOFORMS 1 AND 2)</scope>
    <source>
        <tissue>Lymph</tissue>
        <tissue>Muscle</tissue>
        <tissue>Ovary</tissue>
        <tissue>Uterus</tissue>
    </source>
</reference>
<reference key="6">
    <citation type="journal article" date="2000" name="Adv. Enzyme Regul.">
        <title>The genetic organization and protein crystallographic structure of human serine hydroxymethyltransferase.</title>
        <authorList>
            <person name="Snell K."/>
            <person name="Baumann U."/>
            <person name="Byrne P.C."/>
            <person name="Chave K.J."/>
            <person name="Renwick S.B."/>
            <person name="Sanders P.G."/>
            <person name="Whitehouse S.K."/>
        </authorList>
    </citation>
    <scope>NUCLEOTIDE SEQUENCE [GENOMIC DNA] OF 1-35</scope>
</reference>
<reference key="7">
    <citation type="journal article" date="1997" name="J. Biol. Chem.">
        <title>Molecular cloning, characterization, and regulation of the human mitochondrial serine hydroxymethyltransferase gene.</title>
        <authorList>
            <person name="Stover P.J."/>
            <person name="Chen L.H."/>
            <person name="Suh J.R."/>
            <person name="Stover D.M."/>
            <person name="Keyomarsi K."/>
            <person name="Shane B."/>
        </authorList>
    </citation>
    <scope>NUCLEOTIDE SEQUENCE [GENOMIC DNA] OF 22-504</scope>
</reference>
<reference key="8">
    <citation type="journal article" date="1993" name="J. Biol. Chem.">
        <title>Cloning of human cDNAs encoding mitochondrial and cytosolic serine hydroxymethyltransferases and chromosomal localization.</title>
        <authorList>
            <person name="Garrow T.A."/>
            <person name="Brenner A.A."/>
            <person name="Whitehead M.V."/>
            <person name="Chen X.-N."/>
            <person name="Duncan R.G."/>
            <person name="Korenberg J.R."/>
            <person name="Shane B."/>
        </authorList>
    </citation>
    <scope>NUCLEOTIDE SEQUENCE [MRNA] OF 31-504 (ISOFORM 1)</scope>
</reference>
<reference key="9">
    <citation type="journal article" date="2008" name="J. Biol. Chem.">
        <title>The layered structure of human mitochondrial DNA nucleoids.</title>
        <authorList>
            <person name="Bogenhagen D.F."/>
            <person name="Rousseau D."/>
            <person name="Burke S."/>
        </authorList>
    </citation>
    <scope>SUBCELLULAR LOCATION</scope>
    <scope>FUNCTION IN ASSOCIATION WITH MITOCHONDRIAL DNA</scope>
    <scope>IDENTIFICATION BY MASS SPECTROMETRY</scope>
</reference>
<reference key="10">
    <citation type="journal article" date="2009" name="Science">
        <title>Lysine acetylation targets protein complexes and co-regulates major cellular functions.</title>
        <authorList>
            <person name="Choudhary C."/>
            <person name="Kumar C."/>
            <person name="Gnad F."/>
            <person name="Nielsen M.L."/>
            <person name="Rehman M."/>
            <person name="Walther T.C."/>
            <person name="Olsen J.V."/>
            <person name="Mann M."/>
        </authorList>
    </citation>
    <scope>ACETYLATION [LARGE SCALE ANALYSIS] AT LYS-103; LYS-181; LYS-196; LYS-297; LYS-356; LYS-464; LYS-469 AND LYS-474</scope>
    <scope>IDENTIFICATION BY MASS SPECTROMETRY [LARGE SCALE ANALYSIS]</scope>
</reference>
<reference key="11">
    <citation type="journal article" date="2011" name="BMC Syst. Biol.">
        <title>Initial characterization of the human central proteome.</title>
        <authorList>
            <person name="Burkard T.R."/>
            <person name="Planyavsky M."/>
            <person name="Kaupe I."/>
            <person name="Breitwieser F.P."/>
            <person name="Buerckstuemmer T."/>
            <person name="Bennett K.L."/>
            <person name="Superti-Furga G."/>
            <person name="Colinge J."/>
        </authorList>
    </citation>
    <scope>IDENTIFICATION BY MASS SPECTROMETRY [LARGE SCALE ANALYSIS]</scope>
</reference>
<reference key="12">
    <citation type="journal article" date="2011" name="Proc. Natl. Acad. Sci. U.S.A.">
        <title>Identification of a de novo thymidylate biosynthesis pathway in mammalian mitochondria.</title>
        <authorList>
            <person name="Anderson D.D."/>
            <person name="Quintero C.M."/>
            <person name="Stover P.J."/>
        </authorList>
    </citation>
    <scope>FUNCTION</scope>
    <scope>SUBCELLULAR LOCATION</scope>
</reference>
<reference key="13">
    <citation type="journal article" date="2013" name="Cell Rep.">
        <title>A BRISC-SHMT complex deubiquitinates IFNAR1 and regulates interferon responses.</title>
        <authorList>
            <person name="Zheng H."/>
            <person name="Gupta V."/>
            <person name="Patterson-Fortin J."/>
            <person name="Bhattacharya S."/>
            <person name="Katlinski K."/>
            <person name="Wu J."/>
            <person name="Varghese B."/>
            <person name="Carbone C.J."/>
            <person name="Aressy B."/>
            <person name="Fuchs S.Y."/>
            <person name="Greenberg R.A."/>
        </authorList>
    </citation>
    <scope>IDENTIFICATION IN THE BRISC COMPLEX</scope>
    <scope>IDENTIFICATION BY MASS SPECTROMETRY</scope>
    <scope>INTERACTION WITH ABRAXAS2</scope>
    <scope>CATALYTIC ACTIVITY</scope>
    <scope>IDENTIFICATION IN A COMPLEX WITH ABRAXAS2 AND IFNAR1</scope>
    <scope>SUBCELLULAR LOCATION</scope>
</reference>
<reference key="14">
    <citation type="journal article" date="2013" name="J. Proteome Res.">
        <title>Toward a comprehensive characterization of a human cancer cell phosphoproteome.</title>
        <authorList>
            <person name="Zhou H."/>
            <person name="Di Palma S."/>
            <person name="Preisinger C."/>
            <person name="Peng M."/>
            <person name="Polat A.N."/>
            <person name="Heck A.J."/>
            <person name="Mohammed S."/>
        </authorList>
    </citation>
    <scope>PHOSPHORYLATION [LARGE SCALE ANALYSIS] AT SER-470</scope>
    <scope>IDENTIFICATION BY MASS SPECTROMETRY [LARGE SCALE ANALYSIS]</scope>
    <source>
        <tissue>Erythroleukemia</tissue>
    </source>
</reference>
<reference key="15">
    <citation type="journal article" date="2014" name="J. Proteomics">
        <title>An enzyme assisted RP-RPLC approach for in-depth analysis of human liver phosphoproteome.</title>
        <authorList>
            <person name="Bian Y."/>
            <person name="Song C."/>
            <person name="Cheng K."/>
            <person name="Dong M."/>
            <person name="Wang F."/>
            <person name="Huang J."/>
            <person name="Sun D."/>
            <person name="Wang L."/>
            <person name="Ye M."/>
            <person name="Zou H."/>
        </authorList>
    </citation>
    <scope>IDENTIFICATION BY MASS SPECTROMETRY [LARGE SCALE ANALYSIS]</scope>
    <source>
        <tissue>Liver</tissue>
    </source>
</reference>
<reference key="16">
    <citation type="journal article" date="2015" name="PLoS ONE">
        <title>Autism and intellectual disability-associated KIRREL3 interacts with neuronal proteins MAP1B and MYO16 with potential roles in neurodevelopment.</title>
        <authorList>
            <person name="Liu Y.F."/>
            <person name="Sowell S.M."/>
            <person name="Luo Y."/>
            <person name="Chaubey A."/>
            <person name="Cameron R.S."/>
            <person name="Kim H.G."/>
            <person name="Srivastava A.K."/>
        </authorList>
    </citation>
    <scope>INTERACTION WITH KIRREL3</scope>
</reference>
<reference key="17">
    <citation type="journal article" date="2015" name="Proteomics">
        <title>N-terminome analysis of the human mitochondrial proteome.</title>
        <authorList>
            <person name="Vaca Jacome A.S."/>
            <person name="Rabilloud T."/>
            <person name="Schaeffer-Reiss C."/>
            <person name="Rompais M."/>
            <person name="Ayoub D."/>
            <person name="Lane L."/>
            <person name="Bairoch A."/>
            <person name="Van Dorsselaer A."/>
            <person name="Carapito C."/>
        </authorList>
    </citation>
    <scope>IDENTIFICATION BY MASS SPECTROMETRY [LARGE SCALE ANALYSIS]</scope>
</reference>
<reference key="18">
    <citation type="journal article" date="2018" name="Cancer Res.">
        <title>SHMT2 desuccinylation by SIRT5 drives cancer cell proliferation.</title>
        <authorList>
            <person name="Yang X."/>
            <person name="Wang Z."/>
            <person name="Li X."/>
            <person name="Liu B."/>
            <person name="Liu M."/>
            <person name="Liu L."/>
            <person name="Chen S."/>
            <person name="Ren M."/>
            <person name="Wang Y."/>
            <person name="Yu M."/>
            <person name="Wang B."/>
            <person name="Zou J."/>
            <person name="Zhu W.G."/>
            <person name="Yin Y."/>
            <person name="Gu W."/>
            <person name="Luo J."/>
        </authorList>
    </citation>
    <scope>SUCCINYLATION AT LYS-280</scope>
    <scope>ACTIVITY REGULATION</scope>
    <scope>SUBUNIT</scope>
    <scope>MUTAGENESIS OF LYS-103; LYS-280; LYS-302; LYS-356; LYS-464; LYS-469 AND LYS-474</scope>
</reference>
<reference key="19">
    <citation type="journal article" date="2018" name="Mol. Cell">
        <title>Serine catabolism by SHMT2 is required for proper mitochondrial translation initiation and maintenance of formylmethionyl-tRNAs.</title>
        <authorList>
            <person name="Minton D.R."/>
            <person name="Nam M."/>
            <person name="McLaughlin D.J."/>
            <person name="Shin J."/>
            <person name="Bayraktar E.C."/>
            <person name="Alvarez S.W."/>
            <person name="Sviderskiy V.O."/>
            <person name="Papagiannakopoulos T."/>
            <person name="Sabatini D.M."/>
            <person name="Birsoy K."/>
            <person name="Possemato R."/>
        </authorList>
    </citation>
    <scope>FUNCTION</scope>
</reference>
<reference key="20">
    <citation type="journal article" date="2018" name="Nature">
        <title>Mitochondrial translation requires folate-dependent tRNA methylation.</title>
        <authorList>
            <person name="Morscher R.J."/>
            <person name="Ducker G.S."/>
            <person name="Li S.H."/>
            <person name="Mayer J.A."/>
            <person name="Gitai Z."/>
            <person name="Sperl W."/>
            <person name="Rabinowitz J.D."/>
        </authorList>
    </citation>
    <scope>FUNCTION</scope>
    <scope>CATALYTIC ACTIVITY</scope>
    <scope>MUTAGENESIS OF GLU-98; TYR-106 AND LYS-280</scope>
</reference>
<reference key="21">
    <citation type="journal article" date="2020" name="Acta Neuropathol.">
        <title>Impairment of the mitochondrial one-carbon metabolism enzyme SHMT2 causes a novel brain and heart developmental syndrome.</title>
        <authorList>
            <consortium name="SHMT2 Working Group"/>
            <person name="Garcia-Cazorla A."/>
            <person name="Verdura E."/>
            <person name="Julia-Palacios N."/>
            <person name="Anderson E.N."/>
            <person name="Goicoechea L."/>
            <person name="Planas-Serra L."/>
            <person name="Tsogtbaatar E."/>
            <person name="Dsouza N.R."/>
            <person name="Schlueter A."/>
            <person name="Urreizti R."/>
            <person name="Tarnowski J.M."/>
            <person name="Gavrilova R.H."/>
            <person name="Ruiz M."/>
            <person name="Rodriguez-Palmero A."/>
            <person name="Fourcade S."/>
            <person name="Cogne B."/>
            <person name="Besnard T."/>
            <person name="Vincent M."/>
            <person name="Bezieau S."/>
            <person name="Folmes C.D."/>
            <person name="Zimmermann M.T."/>
            <person name="Klee E.W."/>
            <person name="Pandey U.B."/>
            <person name="Artuch R."/>
            <person name="Cousin M.A."/>
            <person name="Pujol A."/>
        </authorList>
    </citation>
    <scope>INVOLVEMENT IN NEDCASB</scope>
    <scope>VARIANTS NEDCASB SER-157; ARG-186; ASP-379; SER-423; PRO-435 AND ALA-499</scope>
    <scope>CHARACTERIZATION OF VARIANT NEDCASB ALA-499</scope>
    <scope>FUNCTION</scope>
    <scope>CATALYTIC ACTIVITY</scope>
    <scope>PATHWAY</scope>
</reference>
<reference key="22">
    <citation type="submission" date="2010-10" db="PDB data bank">
        <title>Crystal structure of human mitochondrial serine hydroxymethyltransferase 2.</title>
        <authorList>
            <consortium name="Structural genomics consortium (SGC)"/>
        </authorList>
    </citation>
    <scope>X-RAY CRYSTALLOGRAPHY (2.04 ANGSTROMS) OF 17-504</scope>
</reference>
<reference key="23">
    <citation type="journal article" date="2015" name="FEBS J.">
        <title>How pyridoxal 5'-phosphate differentially regulates human cytosolic and mitochondrial serine hydroxymethyltransferase oligomeric state.</title>
        <authorList>
            <person name="Giardina G."/>
            <person name="Brunotti P."/>
            <person name="Fiascarelli A."/>
            <person name="Cicalini A."/>
            <person name="Costa M.G."/>
            <person name="Buckle A.M."/>
            <person name="di Salvo M.L."/>
            <person name="Giorgi A."/>
            <person name="Marani M."/>
            <person name="Paone A."/>
            <person name="Rinaldo S."/>
            <person name="Paiardini A."/>
            <person name="Contestabile R."/>
            <person name="Cutruzzola F."/>
        </authorList>
    </citation>
    <scope>X-RAY CRYSTALLOGRAPHY (2.60 ANGSTROMS) OF 22-504</scope>
    <scope>FUNCTION</scope>
    <scope>CATALYTIC ACTIVITY</scope>
    <scope>BIOPHYSICOCHEMICAL PROPERTIES</scope>
    <scope>SUBUNIT</scope>
    <scope>COFACTOR</scope>
</reference>
<evidence type="ECO:0000250" key="1">
    <source>
        <dbReference type="UniProtKB" id="P14519"/>
    </source>
</evidence>
<evidence type="ECO:0000256" key="2">
    <source>
        <dbReference type="SAM" id="MobiDB-lite"/>
    </source>
</evidence>
<evidence type="ECO:0000269" key="3">
    <source>
    </source>
</evidence>
<evidence type="ECO:0000269" key="4">
    <source>
    </source>
</evidence>
<evidence type="ECO:0000269" key="5">
    <source>
    </source>
</evidence>
<evidence type="ECO:0000269" key="6">
    <source>
    </source>
</evidence>
<evidence type="ECO:0000269" key="7">
    <source>
    </source>
</evidence>
<evidence type="ECO:0000269" key="8">
    <source>
    </source>
</evidence>
<evidence type="ECO:0000269" key="9">
    <source>
    </source>
</evidence>
<evidence type="ECO:0000269" key="10">
    <source>
    </source>
</evidence>
<evidence type="ECO:0000269" key="11">
    <source>
    </source>
</evidence>
<evidence type="ECO:0000303" key="12">
    <source>
    </source>
</evidence>
<evidence type="ECO:0000303" key="13">
    <source>
    </source>
</evidence>
<evidence type="ECO:0000305" key="14"/>
<evidence type="ECO:0000305" key="15">
    <source>
    </source>
</evidence>
<evidence type="ECO:0000305" key="16">
    <source>
    </source>
</evidence>
<evidence type="ECO:0000305" key="17">
    <source>
    </source>
</evidence>
<evidence type="ECO:0000312" key="18">
    <source>
        <dbReference type="HGNC" id="HGNC:10852"/>
    </source>
</evidence>
<evidence type="ECO:0007744" key="19">
    <source>
    </source>
</evidence>
<evidence type="ECO:0007744" key="20">
    <source>
    </source>
</evidence>
<evidence type="ECO:0007829" key="21">
    <source>
        <dbReference type="PDB" id="6DK3"/>
    </source>
</evidence>
<evidence type="ECO:0007829" key="22">
    <source>
        <dbReference type="PDB" id="6M5O"/>
    </source>
</evidence>
<evidence type="ECO:0007829" key="23">
    <source>
        <dbReference type="PDB" id="6QVL"/>
    </source>
</evidence>
<evidence type="ECO:0007829" key="24">
    <source>
        <dbReference type="PDB" id="8AQL"/>
    </source>
</evidence>
<name>GLYM_HUMAN</name>
<proteinExistence type="evidence at protein level"/>
<protein>
    <recommendedName>
        <fullName>Serine hydroxymethyltransferase, mitochondrial</fullName>
        <shortName>SHMT</shortName>
        <ecNumber evidence="5 6 9 11">2.1.2.1</ecNumber>
    </recommendedName>
    <alternativeName>
        <fullName>Glycine hydroxymethyltransferase</fullName>
    </alternativeName>
    <alternativeName>
        <fullName>Serine methylase</fullName>
    </alternativeName>
</protein>
<organism>
    <name type="scientific">Homo sapiens</name>
    <name type="common">Human</name>
    <dbReference type="NCBI Taxonomy" id="9606"/>
    <lineage>
        <taxon>Eukaryota</taxon>
        <taxon>Metazoa</taxon>
        <taxon>Chordata</taxon>
        <taxon>Craniata</taxon>
        <taxon>Vertebrata</taxon>
        <taxon>Euteleostomi</taxon>
        <taxon>Mammalia</taxon>
        <taxon>Eutheria</taxon>
        <taxon>Euarchontoglires</taxon>
        <taxon>Primates</taxon>
        <taxon>Haplorrhini</taxon>
        <taxon>Catarrhini</taxon>
        <taxon>Hominidae</taxon>
        <taxon>Homo</taxon>
    </lineage>
</organism>
<accession>P34897</accession>
<accession>B7Z9F1</accession>
<accession>E7EQ19</accession>
<accession>E7EU43</accession>
<accession>O00740</accession>
<accession>Q8N1A5</accession>